<comment type="function">
    <text>Removes C-terminal D-alanyl residues from sugar-peptide cell wall precursors.</text>
</comment>
<comment type="catalytic activity">
    <reaction>
        <text>Preferential cleavage: (Ac)2-L-Lys-D-Ala-|-D-Ala. Also transpeptidation of peptidyl-alanyl moieties that are N-acyl substituents of D-alanine.</text>
        <dbReference type="EC" id="3.4.16.4"/>
    </reaction>
</comment>
<comment type="pathway">
    <text>Cell wall biogenesis; peptidoglycan biosynthesis.</text>
</comment>
<comment type="subcellular location">
    <subcellularLocation>
        <location evidence="3">Cell inner membrane</location>
        <topology evidence="3">Peripheral membrane protein</topology>
    </subcellularLocation>
    <text evidence="3">N-terminal lies in the periplasmic space.</text>
</comment>
<comment type="similarity">
    <text evidence="3">Belongs to the peptidase S11 family.</text>
</comment>
<comment type="sequence caution" evidence="3">
    <conflict type="erroneous initiation">
        <sequence resource="EMBL-CDS" id="AAA16416"/>
    </conflict>
    <text>Truncated N-terminus.</text>
</comment>
<accession>P33013</accession>
<name>DACD_ECOLI</name>
<reference key="1">
    <citation type="journal article" date="1996" name="J. Bacteriol.">
        <title>dacD, an Escherichia coli gene encoding a novel penicillin-binding protein (PBP6b) with DD-carboxypeptidase activity.</title>
        <authorList>
            <person name="Baquero M.-R."/>
            <person name="Bouzon M."/>
            <person name="Quintela J.C."/>
            <person name="Ayala J.A."/>
            <person name="Moreno F."/>
        </authorList>
    </citation>
    <scope>NUCLEOTIDE SEQUENCE [GENOMIC DNA]</scope>
    <scope>CHARACTERIZATION</scope>
</reference>
<reference key="2">
    <citation type="submission" date="1993-10" db="EMBL/GenBank/DDBJ databases">
        <title>Automated multiplex sequencing of the E.coli genome.</title>
        <authorList>
            <person name="Richterich P."/>
            <person name="Lakey N."/>
            <person name="Gryan G."/>
            <person name="Jaehn L."/>
            <person name="Mintz L."/>
            <person name="Robison K."/>
            <person name="Church G.M."/>
        </authorList>
    </citation>
    <scope>NUCLEOTIDE SEQUENCE [LARGE SCALE GENOMIC DNA]</scope>
    <source>
        <strain>K12 / BHB2600</strain>
    </source>
</reference>
<reference key="3">
    <citation type="journal article" date="1996" name="DNA Res.">
        <title>A 460-kb DNA sequence of the Escherichia coli K-12 genome corresponding to the 40.1-50.0 min region on the linkage map.</title>
        <authorList>
            <person name="Itoh T."/>
            <person name="Aiba H."/>
            <person name="Baba T."/>
            <person name="Fujita K."/>
            <person name="Hayashi K."/>
            <person name="Inada T."/>
            <person name="Isono K."/>
            <person name="Kasai H."/>
            <person name="Kimura S."/>
            <person name="Kitakawa M."/>
            <person name="Kitagawa M."/>
            <person name="Makino K."/>
            <person name="Miki T."/>
            <person name="Mizobuchi K."/>
            <person name="Mori H."/>
            <person name="Mori T."/>
            <person name="Motomura K."/>
            <person name="Nakade S."/>
            <person name="Nakamura Y."/>
            <person name="Nashimoto H."/>
            <person name="Nishio Y."/>
            <person name="Oshima T."/>
            <person name="Saito N."/>
            <person name="Sampei G."/>
            <person name="Seki Y."/>
            <person name="Sivasundaram S."/>
            <person name="Tagami H."/>
            <person name="Takeda J."/>
            <person name="Takemoto K."/>
            <person name="Wada C."/>
            <person name="Yamamoto Y."/>
            <person name="Horiuchi T."/>
        </authorList>
    </citation>
    <scope>NUCLEOTIDE SEQUENCE [LARGE SCALE GENOMIC DNA]</scope>
    <source>
        <strain>K12 / W3110 / ATCC 27325 / DSM 5911</strain>
    </source>
</reference>
<reference key="4">
    <citation type="journal article" date="1997" name="Science">
        <title>The complete genome sequence of Escherichia coli K-12.</title>
        <authorList>
            <person name="Blattner F.R."/>
            <person name="Plunkett G. III"/>
            <person name="Bloch C.A."/>
            <person name="Perna N.T."/>
            <person name="Burland V."/>
            <person name="Riley M."/>
            <person name="Collado-Vides J."/>
            <person name="Glasner J.D."/>
            <person name="Rode C.K."/>
            <person name="Mayhew G.F."/>
            <person name="Gregor J."/>
            <person name="Davis N.W."/>
            <person name="Kirkpatrick H.A."/>
            <person name="Goeden M.A."/>
            <person name="Rose D.J."/>
            <person name="Mau B."/>
            <person name="Shao Y."/>
        </authorList>
    </citation>
    <scope>NUCLEOTIDE SEQUENCE [LARGE SCALE GENOMIC DNA]</scope>
    <source>
        <strain>K12 / MG1655 / ATCC 47076</strain>
    </source>
</reference>
<reference key="5">
    <citation type="journal article" date="2006" name="Mol. Syst. Biol.">
        <title>Highly accurate genome sequences of Escherichia coli K-12 strains MG1655 and W3110.</title>
        <authorList>
            <person name="Hayashi K."/>
            <person name="Morooka N."/>
            <person name="Yamamoto Y."/>
            <person name="Fujita K."/>
            <person name="Isono K."/>
            <person name="Choi S."/>
            <person name="Ohtsubo E."/>
            <person name="Baba T."/>
            <person name="Wanner B.L."/>
            <person name="Mori H."/>
            <person name="Horiuchi T."/>
        </authorList>
    </citation>
    <scope>NUCLEOTIDE SEQUENCE [LARGE SCALE GENOMIC DNA]</scope>
    <source>
        <strain>K12 / W3110 / ATCC 27325 / DSM 5911</strain>
    </source>
</reference>
<feature type="signal peptide" evidence="2">
    <location>
        <begin position="1"/>
        <end position="21"/>
    </location>
</feature>
<feature type="chain" id="PRO_0000027234" description="D-alanyl-D-alanine carboxypeptidase DacD">
    <location>
        <begin position="22"/>
        <end position="388"/>
    </location>
</feature>
<feature type="active site" description="Acyl-ester intermediate" evidence="1">
    <location>
        <position position="63"/>
    </location>
</feature>
<feature type="active site" description="Proton acceptor" evidence="1">
    <location>
        <position position="66"/>
    </location>
</feature>
<feature type="active site" evidence="1">
    <location>
        <position position="129"/>
    </location>
</feature>
<feature type="binding site" evidence="1">
    <location>
        <position position="232"/>
    </location>
    <ligand>
        <name>substrate</name>
    </ligand>
</feature>
<feature type="strand" evidence="4">
    <location>
        <begin position="36"/>
        <end position="43"/>
    </location>
</feature>
<feature type="turn" evidence="4">
    <location>
        <begin position="44"/>
        <end position="46"/>
    </location>
</feature>
<feature type="strand" evidence="4">
    <location>
        <begin position="49"/>
        <end position="54"/>
    </location>
</feature>
<feature type="helix" evidence="4">
    <location>
        <begin position="62"/>
        <end position="64"/>
    </location>
</feature>
<feature type="helix" evidence="4">
    <location>
        <begin position="65"/>
        <end position="78"/>
    </location>
</feature>
<feature type="strand" evidence="4">
    <location>
        <begin position="87"/>
        <end position="89"/>
    </location>
</feature>
<feature type="helix" evidence="4">
    <location>
        <begin position="92"/>
        <end position="94"/>
    </location>
</feature>
<feature type="turn" evidence="4">
    <location>
        <begin position="100"/>
        <end position="104"/>
    </location>
</feature>
<feature type="strand" evidence="4">
    <location>
        <begin position="115"/>
        <end position="117"/>
    </location>
</feature>
<feature type="helix" evidence="4">
    <location>
        <begin position="118"/>
        <end position="126"/>
    </location>
</feature>
<feature type="helix" evidence="4">
    <location>
        <begin position="131"/>
        <end position="142"/>
    </location>
</feature>
<feature type="helix" evidence="4">
    <location>
        <begin position="145"/>
        <end position="158"/>
    </location>
</feature>
<feature type="strand" evidence="4">
    <location>
        <begin position="168"/>
        <end position="171"/>
    </location>
</feature>
<feature type="helix" evidence="4">
    <location>
        <begin position="181"/>
        <end position="192"/>
    </location>
</feature>
<feature type="helix" evidence="4">
    <location>
        <begin position="196"/>
        <end position="200"/>
    </location>
</feature>
<feature type="helix" evidence="4">
    <location>
        <begin position="201"/>
        <end position="203"/>
    </location>
</feature>
<feature type="strand" evidence="4">
    <location>
        <begin position="206"/>
        <end position="209"/>
    </location>
</feature>
<feature type="strand" evidence="4">
    <location>
        <begin position="212"/>
        <end position="215"/>
    </location>
</feature>
<feature type="helix" evidence="4">
    <location>
        <begin position="219"/>
        <end position="222"/>
    </location>
</feature>
<feature type="strand" evidence="4">
    <location>
        <begin position="226"/>
        <end position="228"/>
    </location>
</feature>
<feature type="strand" evidence="4">
    <location>
        <begin position="232"/>
        <end position="235"/>
    </location>
</feature>
<feature type="strand" evidence="4">
    <location>
        <begin position="241"/>
        <end position="249"/>
    </location>
</feature>
<feature type="strand" evidence="4">
    <location>
        <begin position="252"/>
        <end position="263"/>
    </location>
</feature>
<feature type="helix" evidence="4">
    <location>
        <begin position="264"/>
        <end position="281"/>
    </location>
</feature>
<feature type="strand" evidence="4">
    <location>
        <begin position="282"/>
        <end position="291"/>
    </location>
</feature>
<feature type="strand" evidence="4">
    <location>
        <begin position="315"/>
        <end position="320"/>
    </location>
</feature>
<feature type="helix" evidence="4">
    <location>
        <begin position="321"/>
        <end position="326"/>
    </location>
</feature>
<feature type="strand" evidence="4">
    <location>
        <begin position="327"/>
        <end position="332"/>
    </location>
</feature>
<feature type="strand" evidence="4">
    <location>
        <begin position="349"/>
        <end position="355"/>
    </location>
</feature>
<feature type="strand" evidence="4">
    <location>
        <begin position="358"/>
        <end position="365"/>
    </location>
</feature>
<dbReference type="EC" id="3.4.16.4"/>
<dbReference type="EMBL" id="U00009">
    <property type="protein sequence ID" value="AAA16416.1"/>
    <property type="status" value="ALT_INIT"/>
    <property type="molecule type" value="Genomic_DNA"/>
</dbReference>
<dbReference type="EMBL" id="U00096">
    <property type="protein sequence ID" value="AAC75071.2"/>
    <property type="molecule type" value="Genomic_DNA"/>
</dbReference>
<dbReference type="EMBL" id="AP009048">
    <property type="protein sequence ID" value="BAA15838.2"/>
    <property type="molecule type" value="Genomic_DNA"/>
</dbReference>
<dbReference type="PIR" id="A64966">
    <property type="entry name" value="A64966"/>
</dbReference>
<dbReference type="RefSeq" id="NP_416514.4">
    <property type="nucleotide sequence ID" value="NC_000913.3"/>
</dbReference>
<dbReference type="RefSeq" id="WP_000830156.1">
    <property type="nucleotide sequence ID" value="NZ_LN832404.1"/>
</dbReference>
<dbReference type="PDB" id="5FSR">
    <property type="method" value="X-ray"/>
    <property type="resolution" value="2.40 A"/>
    <property type="chains" value="A/B=22-374"/>
</dbReference>
<dbReference type="PDBsum" id="5FSR"/>
<dbReference type="SMR" id="P33013"/>
<dbReference type="BioGRID" id="4260413">
    <property type="interactions" value="268"/>
</dbReference>
<dbReference type="FunCoup" id="P33013">
    <property type="interactions" value="265"/>
</dbReference>
<dbReference type="STRING" id="511145.b2010"/>
<dbReference type="MEROPS" id="S11.009"/>
<dbReference type="PaxDb" id="511145-b2010"/>
<dbReference type="EnsemblBacteria" id="AAC75071">
    <property type="protein sequence ID" value="AAC75071"/>
    <property type="gene ID" value="b2010"/>
</dbReference>
<dbReference type="GeneID" id="946518"/>
<dbReference type="KEGG" id="ecj:JW5329"/>
<dbReference type="KEGG" id="eco:b2010"/>
<dbReference type="KEGG" id="ecoc:C3026_11340"/>
<dbReference type="PATRIC" id="fig|1411691.4.peg.242"/>
<dbReference type="EchoBASE" id="EB1839"/>
<dbReference type="eggNOG" id="COG1686">
    <property type="taxonomic scope" value="Bacteria"/>
</dbReference>
<dbReference type="HOGENOM" id="CLU_027070_8_1_6"/>
<dbReference type="InParanoid" id="P33013"/>
<dbReference type="OMA" id="IQAGSWV"/>
<dbReference type="OrthoDB" id="9795979at2"/>
<dbReference type="PhylomeDB" id="P33013"/>
<dbReference type="BioCyc" id="EcoCyc:RPOA-MONOMER"/>
<dbReference type="BioCyc" id="MetaCyc:RPOA-MONOMER"/>
<dbReference type="UniPathway" id="UPA00219"/>
<dbReference type="PRO" id="PR:P33013"/>
<dbReference type="Proteomes" id="UP000000625">
    <property type="component" value="Chromosome"/>
</dbReference>
<dbReference type="GO" id="GO:0005886">
    <property type="term" value="C:plasma membrane"/>
    <property type="evidence" value="ECO:0007669"/>
    <property type="project" value="UniProtKB-SubCell"/>
</dbReference>
<dbReference type="GO" id="GO:0008800">
    <property type="term" value="F:beta-lactamase activity"/>
    <property type="evidence" value="ECO:0000314"/>
    <property type="project" value="EcoCyc"/>
</dbReference>
<dbReference type="GO" id="GO:0004180">
    <property type="term" value="F:carboxypeptidase activity"/>
    <property type="evidence" value="ECO:0000314"/>
    <property type="project" value="EcoCyc"/>
</dbReference>
<dbReference type="GO" id="GO:0008658">
    <property type="term" value="F:penicillin binding"/>
    <property type="evidence" value="ECO:0000314"/>
    <property type="project" value="EcoCyc"/>
</dbReference>
<dbReference type="GO" id="GO:0009002">
    <property type="term" value="F:serine-type D-Ala-D-Ala carboxypeptidase activity"/>
    <property type="evidence" value="ECO:0000255"/>
    <property type="project" value="EcoCyc"/>
</dbReference>
<dbReference type="GO" id="GO:0071555">
    <property type="term" value="P:cell wall organization"/>
    <property type="evidence" value="ECO:0007669"/>
    <property type="project" value="UniProtKB-KW"/>
</dbReference>
<dbReference type="GO" id="GO:0009252">
    <property type="term" value="P:peptidoglycan biosynthetic process"/>
    <property type="evidence" value="ECO:0007669"/>
    <property type="project" value="UniProtKB-UniPathway"/>
</dbReference>
<dbReference type="GO" id="GO:0000270">
    <property type="term" value="P:peptidoglycan metabolic process"/>
    <property type="evidence" value="ECO:0000314"/>
    <property type="project" value="EcoCyc"/>
</dbReference>
<dbReference type="GO" id="GO:0006508">
    <property type="term" value="P:proteolysis"/>
    <property type="evidence" value="ECO:0007669"/>
    <property type="project" value="UniProtKB-KW"/>
</dbReference>
<dbReference type="GO" id="GO:0008360">
    <property type="term" value="P:regulation of cell shape"/>
    <property type="evidence" value="ECO:0000316"/>
    <property type="project" value="EcoCyc"/>
</dbReference>
<dbReference type="FunFam" id="2.60.410.10:FF:000002">
    <property type="entry name" value="D-alanyl-D-alanine carboxypeptidase dacD"/>
    <property type="match status" value="1"/>
</dbReference>
<dbReference type="FunFam" id="3.40.710.10:FF:000001">
    <property type="entry name" value="D-alanyl-D-alanine serine-type carboxypeptidase"/>
    <property type="match status" value="1"/>
</dbReference>
<dbReference type="Gene3D" id="2.60.410.10">
    <property type="entry name" value="D-Ala-D-Ala carboxypeptidase, C-terminal domain"/>
    <property type="match status" value="1"/>
</dbReference>
<dbReference type="Gene3D" id="3.40.710.10">
    <property type="entry name" value="DD-peptidase/beta-lactamase superfamily"/>
    <property type="match status" value="1"/>
</dbReference>
<dbReference type="InterPro" id="IPR012338">
    <property type="entry name" value="Beta-lactam/transpept-like"/>
</dbReference>
<dbReference type="InterPro" id="IPR015956">
    <property type="entry name" value="Peniciliin-bd_prot_C_sf"/>
</dbReference>
<dbReference type="InterPro" id="IPR018044">
    <property type="entry name" value="Peptidase_S11"/>
</dbReference>
<dbReference type="InterPro" id="IPR012907">
    <property type="entry name" value="Peptidase_S11_C"/>
</dbReference>
<dbReference type="InterPro" id="IPR037167">
    <property type="entry name" value="Peptidase_S11_C_sf"/>
</dbReference>
<dbReference type="InterPro" id="IPR001967">
    <property type="entry name" value="Peptidase_S11_N"/>
</dbReference>
<dbReference type="NCBIfam" id="NF008489">
    <property type="entry name" value="PRK11397.1"/>
    <property type="match status" value="1"/>
</dbReference>
<dbReference type="PANTHER" id="PTHR21581">
    <property type="entry name" value="D-ALANYL-D-ALANINE CARBOXYPEPTIDASE"/>
    <property type="match status" value="1"/>
</dbReference>
<dbReference type="PANTHER" id="PTHR21581:SF5">
    <property type="entry name" value="D-ALANYL-D-ALANINE CARBOXYPEPTIDASE DACD"/>
    <property type="match status" value="1"/>
</dbReference>
<dbReference type="Pfam" id="PF07943">
    <property type="entry name" value="PBP5_C"/>
    <property type="match status" value="1"/>
</dbReference>
<dbReference type="Pfam" id="PF00768">
    <property type="entry name" value="Peptidase_S11"/>
    <property type="match status" value="1"/>
</dbReference>
<dbReference type="PRINTS" id="PR00725">
    <property type="entry name" value="DADACBPTASE1"/>
</dbReference>
<dbReference type="SMART" id="SM00936">
    <property type="entry name" value="PBP5_C"/>
    <property type="match status" value="1"/>
</dbReference>
<dbReference type="SUPFAM" id="SSF56601">
    <property type="entry name" value="beta-lactamase/transpeptidase-like"/>
    <property type="match status" value="1"/>
</dbReference>
<dbReference type="SUPFAM" id="SSF69189">
    <property type="entry name" value="Penicillin-binding protein associated domain"/>
    <property type="match status" value="1"/>
</dbReference>
<organism>
    <name type="scientific">Escherichia coli (strain K12)</name>
    <dbReference type="NCBI Taxonomy" id="83333"/>
    <lineage>
        <taxon>Bacteria</taxon>
        <taxon>Pseudomonadati</taxon>
        <taxon>Pseudomonadota</taxon>
        <taxon>Gammaproteobacteria</taxon>
        <taxon>Enterobacterales</taxon>
        <taxon>Enterobacteriaceae</taxon>
        <taxon>Escherichia</taxon>
    </lineage>
</organism>
<proteinExistence type="evidence at protein level"/>
<keyword id="KW-0002">3D-structure</keyword>
<keyword id="KW-0121">Carboxypeptidase</keyword>
<keyword id="KW-0997">Cell inner membrane</keyword>
<keyword id="KW-1003">Cell membrane</keyword>
<keyword id="KW-0133">Cell shape</keyword>
<keyword id="KW-0961">Cell wall biogenesis/degradation</keyword>
<keyword id="KW-0378">Hydrolase</keyword>
<keyword id="KW-0472">Membrane</keyword>
<keyword id="KW-0573">Peptidoglycan synthesis</keyword>
<keyword id="KW-0645">Protease</keyword>
<keyword id="KW-1185">Reference proteome</keyword>
<keyword id="KW-0732">Signal</keyword>
<sequence>MKRRLIIAASLFVFNLSSGFAAENIPFSPQPPEIHAGSWVLMDYTTGQILTAGNEHQQRNPASLTKLMTGYVVDRAIDSHRITPDDIVTVGRDAWAKDNPVFVGSSLMFLKEGDRVSVRDLSRGLIVDSGNDACVALADYIAGGQRQFVEMMNNYAEKLHLKDTHFETVHGLDAPGQHSSAYDLAVLSRAIIHGEPEFYHMYSEKSLTWNGITQQNRNGLLWDKTMNVDGLKTGHTSGAGFNLIASAVDGQRRLIAVVMGADSAKGREEEARKLLRWGQQNFTTVQILHRGKKVGTERIWYGDKENIDLGTEQEFWMVLPKAEIPHIKAKYTLDGKELTAPISAHQRVGEIELYDRDKQVAHWPLVTLESVGEGSMFSRLSDYFHHKA</sequence>
<gene>
    <name type="primary">dacD</name>
    <name type="synonym">phsE</name>
    <name type="synonym">yeeC</name>
    <name type="ordered locus">b2010</name>
    <name type="ordered locus">JW5329</name>
</gene>
<evidence type="ECO:0000250" key="1"/>
<evidence type="ECO:0000255" key="2"/>
<evidence type="ECO:0000305" key="3"/>
<evidence type="ECO:0007829" key="4">
    <source>
        <dbReference type="PDB" id="5FSR"/>
    </source>
</evidence>
<protein>
    <recommendedName>
        <fullName>D-alanyl-D-alanine carboxypeptidase DacD</fullName>
        <shortName>DD-carboxypeptidase</shortName>
        <shortName>DD-peptidase</shortName>
        <ecNumber>3.4.16.4</ecNumber>
    </recommendedName>
    <alternativeName>
        <fullName>Penicillin-binding protein 6b</fullName>
        <shortName>PBP-6b</shortName>
    </alternativeName>
</protein>